<keyword id="KW-0106">Calcium</keyword>
<keyword id="KW-1015">Disulfide bond</keyword>
<keyword id="KW-0325">Glycoprotein</keyword>
<keyword id="KW-0348">Hemagglutinin</keyword>
<keyword id="KW-0430">Lectin</keyword>
<keyword id="KW-0479">Metal-binding</keyword>
<keyword id="KW-0964">Secreted</keyword>
<keyword id="KW-0732">Signal</keyword>
<accession>D2YVJ6</accession>
<protein>
    <recommendedName>
        <fullName>C-type lectin galactose-binding isoform</fullName>
        <shortName>CTL</shortName>
    </recommendedName>
    <alternativeName>
        <fullName>Venom C-type lectin galactose binding isoform</fullName>
    </alternativeName>
</protein>
<evidence type="ECO:0000250" key="1"/>
<evidence type="ECO:0000255" key="2"/>
<evidence type="ECO:0000255" key="3">
    <source>
        <dbReference type="PROSITE-ProRule" id="PRU00040"/>
    </source>
</evidence>
<evidence type="ECO:0000305" key="4"/>
<feature type="signal peptide" evidence="2">
    <location>
        <begin position="1"/>
        <end position="23"/>
    </location>
</feature>
<feature type="chain" id="PRO_0000422548" description="C-type lectin galactose-binding isoform">
    <location>
        <begin position="24"/>
        <end position="158"/>
    </location>
</feature>
<feature type="domain" description="C-type lectin" evidence="3">
    <location>
        <begin position="33"/>
        <end position="155"/>
    </location>
</feature>
<feature type="short sequence motif" description="Galactose-binding">
    <location>
        <begin position="119"/>
        <end position="121"/>
    </location>
</feature>
<feature type="binding site" evidence="1">
    <location>
        <position position="119"/>
    </location>
    <ligand>
        <name>Ca(2+)</name>
        <dbReference type="ChEBI" id="CHEBI:29108"/>
    </ligand>
</feature>
<feature type="binding site" evidence="1">
    <location>
        <position position="121"/>
    </location>
    <ligand>
        <name>Ca(2+)</name>
        <dbReference type="ChEBI" id="CHEBI:29108"/>
    </ligand>
</feature>
<feature type="binding site" evidence="1">
    <location>
        <position position="127"/>
    </location>
    <ligand>
        <name>Ca(2+)</name>
        <dbReference type="ChEBI" id="CHEBI:29108"/>
    </ligand>
</feature>
<feature type="binding site" evidence="1">
    <location>
        <position position="142"/>
    </location>
    <ligand>
        <name>Ca(2+)</name>
        <dbReference type="ChEBI" id="CHEBI:29108"/>
    </ligand>
</feature>
<feature type="binding site" evidence="1">
    <location>
        <position position="143"/>
    </location>
    <ligand>
        <name>Ca(2+)</name>
        <dbReference type="ChEBI" id="CHEBI:29108"/>
    </ligand>
</feature>
<feature type="glycosylation site" description="N-linked (GlcNAc...) asparagine" evidence="2">
    <location>
        <position position="134"/>
    </location>
</feature>
<feature type="disulfide bond" evidence="3">
    <location>
        <begin position="26"/>
        <end position="37"/>
    </location>
</feature>
<feature type="disulfide bond" evidence="3">
    <location>
        <begin position="54"/>
        <end position="154"/>
    </location>
</feature>
<feature type="disulfide bond" evidence="3">
    <location>
        <begin position="129"/>
        <end position="146"/>
    </location>
</feature>
<sequence length="158" mass="18617">MGRFLLVTLSLLVVAFSLNGANSCCCPQDWLPRNGFCYKVFNHLKNWNDAEMYCRKFKPGCHLASLHSNADAVEFSEYITDYLTGQGHVWIGLRDTKKKYIWEWTDRSRTDFLPWRKDQPDHFNNEEFCVETVNFTGYLQWNDDSCTALRPFLCQCKY</sequence>
<name>LECG_PSEPO</name>
<organism>
    <name type="scientific">Pseudechis porphyriacus</name>
    <name type="common">Red-bellied black snake</name>
    <dbReference type="NCBI Taxonomy" id="8671"/>
    <lineage>
        <taxon>Eukaryota</taxon>
        <taxon>Metazoa</taxon>
        <taxon>Chordata</taxon>
        <taxon>Craniata</taxon>
        <taxon>Vertebrata</taxon>
        <taxon>Euteleostomi</taxon>
        <taxon>Lepidosauria</taxon>
        <taxon>Squamata</taxon>
        <taxon>Bifurcata</taxon>
        <taxon>Unidentata</taxon>
        <taxon>Episquamata</taxon>
        <taxon>Toxicofera</taxon>
        <taxon>Serpentes</taxon>
        <taxon>Colubroidea</taxon>
        <taxon>Elapidae</taxon>
        <taxon>Hydrophiinae</taxon>
        <taxon>Pseudechis</taxon>
    </lineage>
</organism>
<dbReference type="EMBL" id="EF194739">
    <property type="protein sequence ID" value="ABP94088.1"/>
    <property type="molecule type" value="mRNA"/>
</dbReference>
<dbReference type="SMR" id="D2YVJ6"/>
<dbReference type="GO" id="GO:0005576">
    <property type="term" value="C:extracellular region"/>
    <property type="evidence" value="ECO:0007669"/>
    <property type="project" value="UniProtKB-SubCell"/>
</dbReference>
<dbReference type="GO" id="GO:0030246">
    <property type="term" value="F:carbohydrate binding"/>
    <property type="evidence" value="ECO:0007669"/>
    <property type="project" value="UniProtKB-KW"/>
</dbReference>
<dbReference type="GO" id="GO:0046872">
    <property type="term" value="F:metal ion binding"/>
    <property type="evidence" value="ECO:0007669"/>
    <property type="project" value="UniProtKB-KW"/>
</dbReference>
<dbReference type="FunFam" id="3.10.100.10:FF:000015">
    <property type="entry name" value="C-type lectin Cal"/>
    <property type="match status" value="1"/>
</dbReference>
<dbReference type="Gene3D" id="3.10.100.10">
    <property type="entry name" value="Mannose-Binding Protein A, subunit A"/>
    <property type="match status" value="1"/>
</dbReference>
<dbReference type="InterPro" id="IPR001304">
    <property type="entry name" value="C-type_lectin-like"/>
</dbReference>
<dbReference type="InterPro" id="IPR016186">
    <property type="entry name" value="C-type_lectin-like/link_sf"/>
</dbReference>
<dbReference type="InterPro" id="IPR050111">
    <property type="entry name" value="C-type_lectin/snaclec_domain"/>
</dbReference>
<dbReference type="InterPro" id="IPR018378">
    <property type="entry name" value="C-type_lectin_CS"/>
</dbReference>
<dbReference type="InterPro" id="IPR016187">
    <property type="entry name" value="CTDL_fold"/>
</dbReference>
<dbReference type="PANTHER" id="PTHR22803">
    <property type="entry name" value="MANNOSE, PHOSPHOLIPASE, LECTIN RECEPTOR RELATED"/>
    <property type="match status" value="1"/>
</dbReference>
<dbReference type="Pfam" id="PF00059">
    <property type="entry name" value="Lectin_C"/>
    <property type="match status" value="1"/>
</dbReference>
<dbReference type="PRINTS" id="PR01504">
    <property type="entry name" value="PNCREATITSAP"/>
</dbReference>
<dbReference type="SMART" id="SM00034">
    <property type="entry name" value="CLECT"/>
    <property type="match status" value="1"/>
</dbReference>
<dbReference type="SUPFAM" id="SSF56436">
    <property type="entry name" value="C-type lectin-like"/>
    <property type="match status" value="1"/>
</dbReference>
<dbReference type="PROSITE" id="PS00615">
    <property type="entry name" value="C_TYPE_LECTIN_1"/>
    <property type="match status" value="1"/>
</dbReference>
<dbReference type="PROSITE" id="PS50041">
    <property type="entry name" value="C_TYPE_LECTIN_2"/>
    <property type="match status" value="1"/>
</dbReference>
<proteinExistence type="evidence at transcript level"/>
<comment type="function">
    <text evidence="1">Galactose-binding lectin that binds to and agglutinates erythrocytes in a calcium-dependent manner.</text>
</comment>
<comment type="subunit">
    <text evidence="1">Homodimer; disulfide-linked.</text>
</comment>
<comment type="subcellular location">
    <subcellularLocation>
        <location evidence="1">Secreted</location>
    </subcellularLocation>
</comment>
<comment type="tissue specificity">
    <text>Expressed by the venom gland.</text>
</comment>
<comment type="similarity">
    <text evidence="4">Belongs to the true venom lectin family.</text>
</comment>
<reference key="1">
    <citation type="journal article" date="2011" name="Biochimie">
        <title>Characterisation of a mannose-binding C-type lectin from Oxyuranus scutellatus snake venom.</title>
        <authorList>
            <person name="Earl S.T."/>
            <person name="Robson J."/>
            <person name="Trabi M."/>
            <person name="de Jersey J."/>
            <person name="Masci P.P."/>
            <person name="Lavin M.F."/>
        </authorList>
    </citation>
    <scope>NUCLEOTIDE SEQUENCE [MRNA]</scope>
    <source>
        <tissue>Venom gland</tissue>
    </source>
</reference>